<feature type="chain" id="PRO_0000131105" description="Large ribosomal subunit protein uL6">
    <location>
        <begin position="1"/>
        <end position="141" status="greater than"/>
    </location>
</feature>
<feature type="non-terminal residue">
    <location>
        <position position="141"/>
    </location>
</feature>
<protein>
    <recommendedName>
        <fullName evidence="1">Large ribosomal subunit protein uL6</fullName>
    </recommendedName>
    <alternativeName>
        <fullName>60S ribosomal protein L9</fullName>
    </alternativeName>
</protein>
<organism>
    <name type="scientific">Haemonchus contortus</name>
    <name type="common">Barber pole worm</name>
    <dbReference type="NCBI Taxonomy" id="6289"/>
    <lineage>
        <taxon>Eukaryota</taxon>
        <taxon>Metazoa</taxon>
        <taxon>Ecdysozoa</taxon>
        <taxon>Nematoda</taxon>
        <taxon>Chromadorea</taxon>
        <taxon>Rhabditida</taxon>
        <taxon>Rhabditina</taxon>
        <taxon>Rhabditomorpha</taxon>
        <taxon>Strongyloidea</taxon>
        <taxon>Trichostrongylidae</taxon>
        <taxon>Haemonchus</taxon>
    </lineage>
</organism>
<evidence type="ECO:0000305" key="1"/>
<reference key="1">
    <citation type="submission" date="1997-05" db="EMBL/GenBank/DDBJ databases">
        <authorList>
            <person name="Skinner T.M."/>
        </authorList>
    </citation>
    <scope>NUCLEOTIDE SEQUENCE [MRNA]</scope>
</reference>
<keyword id="KW-0687">Ribonucleoprotein</keyword>
<keyword id="KW-0689">Ribosomal protein</keyword>
<name>RL9_HAECO</name>
<dbReference type="EMBL" id="Y13428">
    <property type="protein sequence ID" value="CAA73840.1"/>
    <property type="molecule type" value="mRNA"/>
</dbReference>
<dbReference type="SMR" id="O02376"/>
<dbReference type="Proteomes" id="UP000025227">
    <property type="component" value="Unplaced"/>
</dbReference>
<dbReference type="GO" id="GO:0022625">
    <property type="term" value="C:cytosolic large ribosomal subunit"/>
    <property type="evidence" value="ECO:0007669"/>
    <property type="project" value="TreeGrafter"/>
</dbReference>
<dbReference type="GO" id="GO:0019843">
    <property type="term" value="F:rRNA binding"/>
    <property type="evidence" value="ECO:0007669"/>
    <property type="project" value="InterPro"/>
</dbReference>
<dbReference type="GO" id="GO:0003735">
    <property type="term" value="F:structural constituent of ribosome"/>
    <property type="evidence" value="ECO:0007669"/>
    <property type="project" value="InterPro"/>
</dbReference>
<dbReference type="GO" id="GO:0002181">
    <property type="term" value="P:cytoplasmic translation"/>
    <property type="evidence" value="ECO:0007669"/>
    <property type="project" value="TreeGrafter"/>
</dbReference>
<dbReference type="FunFam" id="3.90.930.12:FF:000005">
    <property type="entry name" value="60S ribosomal protein L9"/>
    <property type="match status" value="1"/>
</dbReference>
<dbReference type="Gene3D" id="3.90.930.12">
    <property type="entry name" value="Ribosomal protein L6, alpha-beta domain"/>
    <property type="match status" value="2"/>
</dbReference>
<dbReference type="InterPro" id="IPR000702">
    <property type="entry name" value="Ribosomal_uL6-like"/>
</dbReference>
<dbReference type="InterPro" id="IPR036789">
    <property type="entry name" value="Ribosomal_uL6-like_a/b-dom_sf"/>
</dbReference>
<dbReference type="InterPro" id="IPR020040">
    <property type="entry name" value="Ribosomal_uL6_a/b-dom"/>
</dbReference>
<dbReference type="PANTHER" id="PTHR11655:SF16">
    <property type="entry name" value="60S RIBOSOMAL PROTEIN L9"/>
    <property type="match status" value="1"/>
</dbReference>
<dbReference type="PANTHER" id="PTHR11655">
    <property type="entry name" value="60S/50S RIBOSOMAL PROTEIN L6/L9"/>
    <property type="match status" value="1"/>
</dbReference>
<dbReference type="Pfam" id="PF00347">
    <property type="entry name" value="Ribosomal_L6"/>
    <property type="match status" value="1"/>
</dbReference>
<dbReference type="PIRSF" id="PIRSF002162">
    <property type="entry name" value="Ribosomal_L6"/>
    <property type="match status" value="1"/>
</dbReference>
<dbReference type="SUPFAM" id="SSF56053">
    <property type="entry name" value="Ribosomal protein L6"/>
    <property type="match status" value="2"/>
</dbReference>
<accession>O02376</accession>
<comment type="similarity">
    <text evidence="1">Belongs to the universal ribosomal protein uL6 family.</text>
</comment>
<proteinExistence type="evidence at transcript level"/>
<sequence length="141" mass="16440">MKLVESNDTVDFPDGVTFTVKNRVVHVTGPRGTLKRDFRHLHMEMERVGKNQLRVRKWFGVRKEIAAIRTVCSHIQNMIKGVTKGFRYKMRSVYAHFPINVTLQDGGRTVEIRNFLGEKIVRPVPLRMCHCHVVHFTRTLD</sequence>